<comment type="function">
    <text>Actins are highly conserved proteins that are involved in various types of cell motility and are ubiquitously expressed in all eukaryotic cells. Essential component of cell cytoskeleton; plays an important role in cytoplasmic streaming, cell shape determination, cell division, organelle movement and extension growth.</text>
</comment>
<comment type="catalytic activity">
    <reaction evidence="1">
        <text>ATP + H2O = ADP + phosphate + H(+)</text>
        <dbReference type="Rhea" id="RHEA:13065"/>
        <dbReference type="ChEBI" id="CHEBI:15377"/>
        <dbReference type="ChEBI" id="CHEBI:15378"/>
        <dbReference type="ChEBI" id="CHEBI:30616"/>
        <dbReference type="ChEBI" id="CHEBI:43474"/>
        <dbReference type="ChEBI" id="CHEBI:456216"/>
    </reaction>
</comment>
<comment type="subcellular location">
    <subcellularLocation>
        <location>Cytoplasm</location>
        <location>Cytoskeleton</location>
    </subcellularLocation>
</comment>
<comment type="miscellaneous">
    <text>There are at least 13 actin genes in potato.</text>
</comment>
<comment type="similarity">
    <text evidence="2">Belongs to the actin family.</text>
</comment>
<proteinExistence type="inferred from homology"/>
<dbReference type="EC" id="3.6.4.-" evidence="1"/>
<dbReference type="EMBL" id="U60488">
    <property type="protein sequence ID" value="AAB40101.1"/>
    <property type="molecule type" value="Genomic_DNA"/>
</dbReference>
<dbReference type="SMR" id="P93587"/>
<dbReference type="STRING" id="4113.P93587"/>
<dbReference type="InParanoid" id="P93587"/>
<dbReference type="Proteomes" id="UP000011115">
    <property type="component" value="Unassembled WGS sequence"/>
</dbReference>
<dbReference type="ExpressionAtlas" id="P93587">
    <property type="expression patterns" value="baseline"/>
</dbReference>
<dbReference type="GO" id="GO:0015629">
    <property type="term" value="C:actin cytoskeleton"/>
    <property type="evidence" value="ECO:0000318"/>
    <property type="project" value="GO_Central"/>
</dbReference>
<dbReference type="GO" id="GO:0005737">
    <property type="term" value="C:cytoplasm"/>
    <property type="evidence" value="ECO:0007669"/>
    <property type="project" value="UniProtKB-KW"/>
</dbReference>
<dbReference type="GO" id="GO:0005524">
    <property type="term" value="F:ATP binding"/>
    <property type="evidence" value="ECO:0007669"/>
    <property type="project" value="UniProtKB-KW"/>
</dbReference>
<dbReference type="GO" id="GO:0016787">
    <property type="term" value="F:hydrolase activity"/>
    <property type="evidence" value="ECO:0007669"/>
    <property type="project" value="UniProtKB-KW"/>
</dbReference>
<dbReference type="CDD" id="cd10224">
    <property type="entry name" value="ASKHA_NBD_actin"/>
    <property type="match status" value="1"/>
</dbReference>
<dbReference type="FunFam" id="2.30.36.70:FF:000001">
    <property type="entry name" value="Actin, alpha skeletal muscle"/>
    <property type="match status" value="1"/>
</dbReference>
<dbReference type="FunFam" id="3.30.420.40:FF:000291">
    <property type="entry name" value="Actin, alpha skeletal muscle"/>
    <property type="match status" value="1"/>
</dbReference>
<dbReference type="FunFam" id="3.90.640.10:FF:000001">
    <property type="entry name" value="Actin, muscle"/>
    <property type="match status" value="1"/>
</dbReference>
<dbReference type="FunFam" id="3.30.420.40:FF:000404">
    <property type="entry name" value="Major actin"/>
    <property type="match status" value="1"/>
</dbReference>
<dbReference type="Gene3D" id="3.30.420.40">
    <property type="match status" value="2"/>
</dbReference>
<dbReference type="Gene3D" id="3.90.640.10">
    <property type="entry name" value="Actin, Chain A, domain 4"/>
    <property type="match status" value="1"/>
</dbReference>
<dbReference type="InterPro" id="IPR004000">
    <property type="entry name" value="Actin"/>
</dbReference>
<dbReference type="InterPro" id="IPR020902">
    <property type="entry name" value="Actin/actin-like_CS"/>
</dbReference>
<dbReference type="InterPro" id="IPR004001">
    <property type="entry name" value="Actin_CS"/>
</dbReference>
<dbReference type="InterPro" id="IPR043129">
    <property type="entry name" value="ATPase_NBD"/>
</dbReference>
<dbReference type="PANTHER" id="PTHR11937">
    <property type="entry name" value="ACTIN"/>
    <property type="match status" value="1"/>
</dbReference>
<dbReference type="Pfam" id="PF00022">
    <property type="entry name" value="Actin"/>
    <property type="match status" value="1"/>
</dbReference>
<dbReference type="PRINTS" id="PR00190">
    <property type="entry name" value="ACTIN"/>
</dbReference>
<dbReference type="SMART" id="SM00268">
    <property type="entry name" value="ACTIN"/>
    <property type="match status" value="1"/>
</dbReference>
<dbReference type="SUPFAM" id="SSF53067">
    <property type="entry name" value="Actin-like ATPase domain"/>
    <property type="match status" value="2"/>
</dbReference>
<dbReference type="PROSITE" id="PS00406">
    <property type="entry name" value="ACTINS_1"/>
    <property type="match status" value="1"/>
</dbReference>
<dbReference type="PROSITE" id="PS01132">
    <property type="entry name" value="ACTINS_ACT_LIKE"/>
    <property type="match status" value="1"/>
</dbReference>
<reference key="1">
    <citation type="journal article" date="1996" name="Mol. Biol. Evol.">
        <title>Phylogeny and substitution rates of angiosperm actin genes.</title>
        <authorList>
            <person name="Moniz de Sa M."/>
            <person name="Drouin G."/>
        </authorList>
    </citation>
    <scope>NUCLEOTIDE SEQUENCE [GENOMIC DNA]</scope>
</reference>
<accession>P93587</accession>
<organism>
    <name type="scientific">Solanum tuberosum</name>
    <name type="common">Potato</name>
    <dbReference type="NCBI Taxonomy" id="4113"/>
    <lineage>
        <taxon>Eukaryota</taxon>
        <taxon>Viridiplantae</taxon>
        <taxon>Streptophyta</taxon>
        <taxon>Embryophyta</taxon>
        <taxon>Tracheophyta</taxon>
        <taxon>Spermatophyta</taxon>
        <taxon>Magnoliopsida</taxon>
        <taxon>eudicotyledons</taxon>
        <taxon>Gunneridae</taxon>
        <taxon>Pentapetalae</taxon>
        <taxon>asterids</taxon>
        <taxon>lamiids</taxon>
        <taxon>Solanales</taxon>
        <taxon>Solanaceae</taxon>
        <taxon>Solanoideae</taxon>
        <taxon>Solaneae</taxon>
        <taxon>Solanum</taxon>
    </lineage>
</organism>
<name>ACT1_SOLTU</name>
<sequence>AGFAGDDAPRAVFPSIVGRPRHTGVMVGMGQKDAYVGDEAQSKRGILSLKYPIEHGIVSNWDDMEKIWHHTFYNELRVAPEEHPVLLTEAPLNPKANREKMTQIMFETFNTPAMYVAIQAVLSLYASGRTTGIVMDSGDGVSHTVPIYEGYALPHAILRLDLAGRDLTDHLMKILTERGYSFTTTAEREIVRDVKEKLSYIALDYEQEMIDSTVEKTYELPDGQVITIGAERFRCPEVLFQPSIIGMEAAGIHETTYNSIMKCDVDIRKDLYGNIVLSGGTTMFPGIADRMSKEITALAPCSMKIKVVAPPERKYSVWIGGSILASLSTFQQ</sequence>
<protein>
    <recommendedName>
        <fullName>Actin-42</fullName>
        <ecNumber evidence="1">3.6.4.-</ecNumber>
    </recommendedName>
</protein>
<evidence type="ECO:0000250" key="1">
    <source>
        <dbReference type="UniProtKB" id="P68137"/>
    </source>
</evidence>
<evidence type="ECO:0000305" key="2"/>
<keyword id="KW-0067">ATP-binding</keyword>
<keyword id="KW-0963">Cytoplasm</keyword>
<keyword id="KW-0206">Cytoskeleton</keyword>
<keyword id="KW-0378">Hydrolase</keyword>
<keyword id="KW-0547">Nucleotide-binding</keyword>
<keyword id="KW-1185">Reference proteome</keyword>
<feature type="chain" id="PRO_0000089008" description="Actin-42">
    <location>
        <begin position="1" status="less than"/>
        <end position="332" status="greater than"/>
    </location>
</feature>
<feature type="non-terminal residue">
    <location>
        <position position="1"/>
    </location>
</feature>
<feature type="non-terminal residue">
    <location>
        <position position="332"/>
    </location>
</feature>